<gene>
    <name type="primary">DNAJC12</name>
    <name type="synonym">JDP1</name>
</gene>
<sequence length="198" mass="23269">MDAILNYKSEDTEDYYTLLGCDELSSVEQILAEFKVRALECHPDKHPENSKAVETFQKLQKAKDILTNEASRARYDHWRRSQMSMSFQQWEALSDSVKMSMHWAVRGKKDLMLEESDQTPTDKIENEEQDEQKEIKKEEFGSTTEKMEQKESKSVEKSFSPQNPDSPGFANVNCWHLRFRWSGDAPSELLRKFRNYEI</sequence>
<dbReference type="EMBL" id="AB042112">
    <property type="protein sequence ID" value="BAA94963.1"/>
    <property type="molecule type" value="mRNA"/>
</dbReference>
<dbReference type="RefSeq" id="NP_776521.1">
    <property type="nucleotide sequence ID" value="NM_174096.2"/>
</dbReference>
<dbReference type="RefSeq" id="XP_005226380.1">
    <property type="nucleotide sequence ID" value="XM_005226323.3"/>
</dbReference>
<dbReference type="SMR" id="Q9N287"/>
<dbReference type="FunCoup" id="Q9N287">
    <property type="interactions" value="564"/>
</dbReference>
<dbReference type="STRING" id="9913.ENSBTAP00000048829"/>
<dbReference type="PaxDb" id="9913-ENSBTAP00000014521"/>
<dbReference type="GeneID" id="281259"/>
<dbReference type="KEGG" id="bta:281259"/>
<dbReference type="CTD" id="56521"/>
<dbReference type="VEuPathDB" id="HostDB:ENSBTAG00000010932"/>
<dbReference type="eggNOG" id="KOG0691">
    <property type="taxonomic scope" value="Eukaryota"/>
</dbReference>
<dbReference type="HOGENOM" id="CLU_118857_2_0_1"/>
<dbReference type="InParanoid" id="Q9N287"/>
<dbReference type="OMA" id="HWAVRDK"/>
<dbReference type="OrthoDB" id="436519at2759"/>
<dbReference type="TreeFam" id="TF105171"/>
<dbReference type="Proteomes" id="UP000009136">
    <property type="component" value="Chromosome 28"/>
</dbReference>
<dbReference type="Bgee" id="ENSBTAG00000010932">
    <property type="expression patterns" value="Expressed in mammary gland and 100 other cell types or tissues"/>
</dbReference>
<dbReference type="GO" id="GO:0005737">
    <property type="term" value="C:cytoplasm"/>
    <property type="evidence" value="ECO:0000250"/>
    <property type="project" value="UniProtKB"/>
</dbReference>
<dbReference type="CDD" id="cd06257">
    <property type="entry name" value="DnaJ"/>
    <property type="match status" value="1"/>
</dbReference>
<dbReference type="FunFam" id="1.10.287.110:FF:000049">
    <property type="entry name" value="DnaJ homolog subfamily C member 12"/>
    <property type="match status" value="1"/>
</dbReference>
<dbReference type="Gene3D" id="1.10.287.110">
    <property type="entry name" value="DnaJ domain"/>
    <property type="match status" value="1"/>
</dbReference>
<dbReference type="InterPro" id="IPR001623">
    <property type="entry name" value="DnaJ_domain"/>
</dbReference>
<dbReference type="InterPro" id="IPR036869">
    <property type="entry name" value="J_dom_sf"/>
</dbReference>
<dbReference type="InterPro" id="IPR029827">
    <property type="entry name" value="JDP1-like"/>
</dbReference>
<dbReference type="PANTHER" id="PTHR44500">
    <property type="entry name" value="DNAJ HOMOLOG SUBFAMILY C MEMBER 12"/>
    <property type="match status" value="1"/>
</dbReference>
<dbReference type="PANTHER" id="PTHR44500:SF1">
    <property type="entry name" value="DNAJ HOMOLOG SUBFAMILY C MEMBER 12"/>
    <property type="match status" value="1"/>
</dbReference>
<dbReference type="Pfam" id="PF00226">
    <property type="entry name" value="DnaJ"/>
    <property type="match status" value="1"/>
</dbReference>
<dbReference type="PRINTS" id="PR00625">
    <property type="entry name" value="JDOMAIN"/>
</dbReference>
<dbReference type="SMART" id="SM00271">
    <property type="entry name" value="DnaJ"/>
    <property type="match status" value="1"/>
</dbReference>
<dbReference type="SUPFAM" id="SSF46565">
    <property type="entry name" value="Chaperone J-domain"/>
    <property type="match status" value="1"/>
</dbReference>
<dbReference type="PROSITE" id="PS50076">
    <property type="entry name" value="DNAJ_2"/>
    <property type="match status" value="1"/>
</dbReference>
<keyword id="KW-0007">Acetylation</keyword>
<keyword id="KW-0143">Chaperone</keyword>
<keyword id="KW-0963">Cytoplasm</keyword>
<keyword id="KW-0597">Phosphoprotein</keyword>
<keyword id="KW-1185">Reference proteome</keyword>
<proteinExistence type="evidence at transcript level"/>
<protein>
    <recommendedName>
        <fullName>DnaJ homolog subfamily C member 12</fullName>
    </recommendedName>
    <alternativeName>
        <fullName>J domain-containing protein 1</fullName>
    </alternativeName>
</protein>
<comment type="function">
    <text evidence="2">Probable co-chaperone that participates in the proper folding of biopterin-dependent aromatic amino acid hydroxylases, which include phenylalanine-4-hydroxylase (PAH), tyrosine 3-monooxygenase (TH) and peripheral and neuronal tryptophan hydroxylases (TPH1 and TPH2).</text>
</comment>
<comment type="subunit">
    <text evidence="1 2">Interacts with HSPA8 (By similarity). Interacts with TPH1 (By similarity). Interacts with TPH2 (By similarity).</text>
</comment>
<comment type="subcellular location">
    <subcellularLocation>
        <location evidence="2">Cytoplasm</location>
    </subcellularLocation>
</comment>
<name>DJC12_BOVIN</name>
<accession>Q9N287</accession>
<organism>
    <name type="scientific">Bos taurus</name>
    <name type="common">Bovine</name>
    <dbReference type="NCBI Taxonomy" id="9913"/>
    <lineage>
        <taxon>Eukaryota</taxon>
        <taxon>Metazoa</taxon>
        <taxon>Chordata</taxon>
        <taxon>Craniata</taxon>
        <taxon>Vertebrata</taxon>
        <taxon>Euteleostomi</taxon>
        <taxon>Mammalia</taxon>
        <taxon>Eutheria</taxon>
        <taxon>Laurasiatheria</taxon>
        <taxon>Artiodactyla</taxon>
        <taxon>Ruminantia</taxon>
        <taxon>Pecora</taxon>
        <taxon>Bovidae</taxon>
        <taxon>Bovinae</taxon>
        <taxon>Bos</taxon>
    </lineage>
</organism>
<evidence type="ECO:0000250" key="1">
    <source>
        <dbReference type="UniProtKB" id="Q9R022"/>
    </source>
</evidence>
<evidence type="ECO:0000250" key="2">
    <source>
        <dbReference type="UniProtKB" id="Q9UKB3"/>
    </source>
</evidence>
<evidence type="ECO:0000255" key="3">
    <source>
        <dbReference type="PROSITE-ProRule" id="PRU00286"/>
    </source>
</evidence>
<evidence type="ECO:0000256" key="4">
    <source>
        <dbReference type="SAM" id="MobiDB-lite"/>
    </source>
</evidence>
<reference key="1">
    <citation type="journal article" date="2000" name="Biochim. Biophys. Acta">
        <title>Characterization of JDP genes, an evolutionarily conserved J domain-only protein family, from human and moths.</title>
        <authorList>
            <person name="Lee J."/>
            <person name="Hahn Y."/>
            <person name="Yun J.H."/>
            <person name="Mita K."/>
            <person name="Chung J.H."/>
        </authorList>
    </citation>
    <scope>NUCLEOTIDE SEQUENCE [MRNA]</scope>
</reference>
<feature type="chain" id="PRO_0000071065" description="DnaJ homolog subfamily C member 12">
    <location>
        <begin position="1"/>
        <end position="198"/>
    </location>
</feature>
<feature type="domain" description="J" evidence="3">
    <location>
        <begin position="14"/>
        <end position="79"/>
    </location>
</feature>
<feature type="region of interest" description="Disordered" evidence="4">
    <location>
        <begin position="112"/>
        <end position="167"/>
    </location>
</feature>
<feature type="compositionally biased region" description="Basic and acidic residues" evidence="4">
    <location>
        <begin position="120"/>
        <end position="156"/>
    </location>
</feature>
<feature type="modified residue" description="N-acetylmethionine" evidence="2">
    <location>
        <position position="1"/>
    </location>
</feature>
<feature type="modified residue" description="Phosphoserine" evidence="2">
    <location>
        <position position="160"/>
    </location>
</feature>
<feature type="modified residue" description="Phosphoserine" evidence="1">
    <location>
        <position position="166"/>
    </location>
</feature>
<feature type="modified residue" description="Phosphoserine" evidence="1">
    <location>
        <position position="182"/>
    </location>
</feature>